<proteinExistence type="inferred from homology"/>
<organism>
    <name type="scientific">Methanosarcina mazei (strain ATCC BAA-159 / DSM 3647 / Goe1 / Go1 / JCM 11833 / OCM 88)</name>
    <name type="common">Methanosarcina frisia</name>
    <dbReference type="NCBI Taxonomy" id="192952"/>
    <lineage>
        <taxon>Archaea</taxon>
        <taxon>Methanobacteriati</taxon>
        <taxon>Methanobacteriota</taxon>
        <taxon>Stenosarchaea group</taxon>
        <taxon>Methanomicrobia</taxon>
        <taxon>Methanosarcinales</taxon>
        <taxon>Methanosarcinaceae</taxon>
        <taxon>Methanosarcina</taxon>
    </lineage>
</organism>
<keyword id="KW-0963">Cytoplasm</keyword>
<keyword id="KW-0378">Hydrolase</keyword>
<keyword id="KW-0484">Methanogenesis</keyword>
<keyword id="KW-0554">One-carbon metabolism</keyword>
<dbReference type="EC" id="3.5.4.27" evidence="1"/>
<dbReference type="EMBL" id="AE008384">
    <property type="protein sequence ID" value="AAM32349.1"/>
    <property type="molecule type" value="Genomic_DNA"/>
</dbReference>
<dbReference type="RefSeq" id="WP_011034564.1">
    <property type="nucleotide sequence ID" value="NC_003901.1"/>
</dbReference>
<dbReference type="SMR" id="Q8PTR0"/>
<dbReference type="GeneID" id="82161741"/>
<dbReference type="KEGG" id="mma:MM_2653"/>
<dbReference type="PATRIC" id="fig|192952.21.peg.3053"/>
<dbReference type="eggNOG" id="arCOG02675">
    <property type="taxonomic scope" value="Archaea"/>
</dbReference>
<dbReference type="HOGENOM" id="CLU_876031_0_0_2"/>
<dbReference type="UniPathway" id="UPA00640">
    <property type="reaction ID" value="UER00694"/>
</dbReference>
<dbReference type="Proteomes" id="UP000000595">
    <property type="component" value="Chromosome"/>
</dbReference>
<dbReference type="GO" id="GO:0005737">
    <property type="term" value="C:cytoplasm"/>
    <property type="evidence" value="ECO:0007669"/>
    <property type="project" value="UniProtKB-SubCell"/>
</dbReference>
<dbReference type="GO" id="GO:0018759">
    <property type="term" value="F:methenyltetrahydromethanopterin cyclohydrolase activity"/>
    <property type="evidence" value="ECO:0007669"/>
    <property type="project" value="UniProtKB-UniRule"/>
</dbReference>
<dbReference type="GO" id="GO:0019386">
    <property type="term" value="P:methanogenesis, from carbon dioxide"/>
    <property type="evidence" value="ECO:0007669"/>
    <property type="project" value="UniProtKB-UniRule"/>
</dbReference>
<dbReference type="GO" id="GO:0006730">
    <property type="term" value="P:one-carbon metabolic process"/>
    <property type="evidence" value="ECO:0007669"/>
    <property type="project" value="UniProtKB-UniRule"/>
</dbReference>
<dbReference type="CDD" id="cd00545">
    <property type="entry name" value="MCH"/>
    <property type="match status" value="1"/>
</dbReference>
<dbReference type="Gene3D" id="3.10.340.11">
    <property type="entry name" value="Methenyltetrahydromethanopterin Cyclohydrolase, Chain A, domain 1"/>
    <property type="match status" value="1"/>
</dbReference>
<dbReference type="Gene3D" id="3.30.1030.10">
    <property type="entry name" value="Methenyltetrahydromethanopterin Cyclohydrolase, Chain A, domain 2"/>
    <property type="match status" value="1"/>
</dbReference>
<dbReference type="HAMAP" id="MF_00486">
    <property type="entry name" value="McH"/>
    <property type="match status" value="1"/>
</dbReference>
<dbReference type="InterPro" id="IPR003209">
    <property type="entry name" value="METHMP_CycHdrlase"/>
</dbReference>
<dbReference type="NCBIfam" id="TIGR03120">
    <property type="entry name" value="one_C_mch"/>
    <property type="match status" value="1"/>
</dbReference>
<dbReference type="Pfam" id="PF02289">
    <property type="entry name" value="MCH"/>
    <property type="match status" value="1"/>
</dbReference>
<dbReference type="SUPFAM" id="SSF56199">
    <property type="entry name" value="Methenyltetrahydromethanopterin cyclohydrolase"/>
    <property type="match status" value="1"/>
</dbReference>
<gene>
    <name evidence="1" type="primary">mch</name>
    <name type="ordered locus">MM_2653</name>
</gene>
<evidence type="ECO:0000255" key="1">
    <source>
        <dbReference type="HAMAP-Rule" id="MF_00486"/>
    </source>
</evidence>
<protein>
    <recommendedName>
        <fullName evidence="1">Methenyltetrahydromethanopterin cyclohydrolase</fullName>
        <ecNumber evidence="1">3.5.4.27</ecNumber>
    </recommendedName>
    <alternativeName>
        <fullName evidence="1">Methenyl-H4MPT cyclohydrolase</fullName>
    </alternativeName>
</protein>
<feature type="chain" id="PRO_0000140883" description="Methenyltetrahydromethanopterin cyclohydrolase">
    <location>
        <begin position="1"/>
        <end position="321"/>
    </location>
</feature>
<reference key="1">
    <citation type="journal article" date="2002" name="J. Mol. Microbiol. Biotechnol.">
        <title>The genome of Methanosarcina mazei: evidence for lateral gene transfer between Bacteria and Archaea.</title>
        <authorList>
            <person name="Deppenmeier U."/>
            <person name="Johann A."/>
            <person name="Hartsch T."/>
            <person name="Merkl R."/>
            <person name="Schmitz R.A."/>
            <person name="Martinez-Arias R."/>
            <person name="Henne A."/>
            <person name="Wiezer A."/>
            <person name="Baeumer S."/>
            <person name="Jacobi C."/>
            <person name="Brueggemann H."/>
            <person name="Lienard T."/>
            <person name="Christmann A."/>
            <person name="Boemecke M."/>
            <person name="Steckel S."/>
            <person name="Bhattacharyya A."/>
            <person name="Lykidis A."/>
            <person name="Overbeek R."/>
            <person name="Klenk H.-P."/>
            <person name="Gunsalus R.P."/>
            <person name="Fritz H.-J."/>
            <person name="Gottschalk G."/>
        </authorList>
    </citation>
    <scope>NUCLEOTIDE SEQUENCE [LARGE SCALE GENOMIC DNA]</scope>
    <source>
        <strain>ATCC BAA-159 / DSM 3647 / Goe1 / Go1 / JCM 11833 / OCM 88</strain>
    </source>
</reference>
<name>MCH_METMA</name>
<accession>Q8PTR0</accession>
<comment type="function">
    <text evidence="1">Catalyzes the reversible interconversion of 5-formyl-H(4)MPT to methenyl-H(4)MPT(+).</text>
</comment>
<comment type="catalytic activity">
    <reaction evidence="1">
        <text>5,10-methenyl-5,6,7,8-tetrahydromethanopterin + H2O = N(5)-formyl-5,6,7,8-tetrahydromethanopterin + H(+)</text>
        <dbReference type="Rhea" id="RHEA:19053"/>
        <dbReference type="ChEBI" id="CHEBI:15377"/>
        <dbReference type="ChEBI" id="CHEBI:15378"/>
        <dbReference type="ChEBI" id="CHEBI:58018"/>
        <dbReference type="ChEBI" id="CHEBI:58337"/>
        <dbReference type="EC" id="3.5.4.27"/>
    </reaction>
</comment>
<comment type="pathway">
    <text evidence="1">One-carbon metabolism; methanogenesis from CO(2); 5,10-methenyl-5,6,7,8-tetrahydromethanopterin from CO(2): step 3/3.</text>
</comment>
<comment type="subcellular location">
    <subcellularLocation>
        <location evidence="1">Cytoplasm</location>
    </subcellularLocation>
</comment>
<comment type="similarity">
    <text evidence="1">Belongs to the MCH family.</text>
</comment>
<sequence length="321" mass="34982">MISVNEMGSYVIEEMLDWSEDLKTEVIKLENGATIIDCGIKAEGGYEAGMYLARLCLADLADLKYSTFDLNGIKWPAIQVATDNPVIACMASQYAGWRISVGNYFGMGSGPARALGLKPKELYEEIGYEDDFEAAVLVMESDKLPDEKVVEYIAKHCSVDPENVMIAVAPTASIAGSVQISARVVETGIHKFESIGFDINCIKSGYGIAPIAPIVGNDVQCMGSTNDCVIYCGETNYTVSFEGELAKLEDFVRKVPSTTSDDFGKPFYQTFKAANFDFFKVDAGMFAPARVTVNDLKNKKTISSGGLYPEILLESFGIRKV</sequence>